<comment type="function">
    <text evidence="1">Cell division protein that may be involved in stabilizing or promoting the assembly of the division complex.</text>
</comment>
<comment type="subcellular location">
    <subcellularLocation>
        <location evidence="1">Cell membrane</location>
        <topology evidence="1">Single-pass type II membrane protein</topology>
    </subcellularLocation>
    <text evidence="1">Localizes to the division septum.</text>
</comment>
<comment type="similarity">
    <text evidence="1">Belongs to the FtsQ/DivIB family. DivIB subfamily.</text>
</comment>
<accession>D8ILJ0</accession>
<dbReference type="EMBL" id="CP002034">
    <property type="protein sequence ID" value="ADJ79142.1"/>
    <property type="molecule type" value="Genomic_DNA"/>
</dbReference>
<dbReference type="RefSeq" id="WP_014568500.1">
    <property type="nucleotide sequence ID" value="NC_017481.1"/>
</dbReference>
<dbReference type="KEGG" id="lsi:HN6_00866"/>
<dbReference type="PATRIC" id="fig|712961.3.peg.783"/>
<dbReference type="HOGENOM" id="CLU_046278_0_1_9"/>
<dbReference type="GO" id="GO:0032153">
    <property type="term" value="C:cell division site"/>
    <property type="evidence" value="ECO:0007669"/>
    <property type="project" value="UniProtKB-UniRule"/>
</dbReference>
<dbReference type="GO" id="GO:0005886">
    <property type="term" value="C:plasma membrane"/>
    <property type="evidence" value="ECO:0007669"/>
    <property type="project" value="UniProtKB-SubCell"/>
</dbReference>
<dbReference type="GO" id="GO:0043093">
    <property type="term" value="P:FtsZ-dependent cytokinesis"/>
    <property type="evidence" value="ECO:0007669"/>
    <property type="project" value="UniProtKB-UniRule"/>
</dbReference>
<dbReference type="Gene3D" id="3.40.50.10960">
    <property type="match status" value="1"/>
</dbReference>
<dbReference type="HAMAP" id="MF_00912">
    <property type="entry name" value="DivIB"/>
    <property type="match status" value="1"/>
</dbReference>
<dbReference type="InterPro" id="IPR005548">
    <property type="entry name" value="Cell_div_FtsQ/DivIB_C"/>
</dbReference>
<dbReference type="InterPro" id="IPR026580">
    <property type="entry name" value="DivIB"/>
</dbReference>
<dbReference type="InterPro" id="IPR050487">
    <property type="entry name" value="FtsQ_DivIB"/>
</dbReference>
<dbReference type="InterPro" id="IPR034746">
    <property type="entry name" value="POTRA"/>
</dbReference>
<dbReference type="PANTHER" id="PTHR37820">
    <property type="entry name" value="CELL DIVISION PROTEIN DIVIB"/>
    <property type="match status" value="1"/>
</dbReference>
<dbReference type="PANTHER" id="PTHR37820:SF1">
    <property type="entry name" value="CELL DIVISION PROTEIN FTSQ"/>
    <property type="match status" value="1"/>
</dbReference>
<dbReference type="Pfam" id="PF03799">
    <property type="entry name" value="FtsQ_DivIB_C"/>
    <property type="match status" value="1"/>
</dbReference>
<dbReference type="PROSITE" id="PS51779">
    <property type="entry name" value="POTRA"/>
    <property type="match status" value="1"/>
</dbReference>
<organism>
    <name type="scientific">Ligilactobacillus salivarius (strain CECT 5713)</name>
    <name type="common">Lactobacillus salivarius</name>
    <dbReference type="NCBI Taxonomy" id="712961"/>
    <lineage>
        <taxon>Bacteria</taxon>
        <taxon>Bacillati</taxon>
        <taxon>Bacillota</taxon>
        <taxon>Bacilli</taxon>
        <taxon>Lactobacillales</taxon>
        <taxon>Lactobacillaceae</taxon>
        <taxon>Ligilactobacillus</taxon>
    </lineage>
</organism>
<reference key="1">
    <citation type="journal article" date="2010" name="J. Bacteriol.">
        <title>Complete genome sequence of Lactobacillus salivarius CECT 5713, a probiotic strain isolated from human milk and infant feces.</title>
        <authorList>
            <person name="Jimenez E."/>
            <person name="Martin R."/>
            <person name="Maldonado A."/>
            <person name="Martin V."/>
            <person name="Gomez de Segura A."/>
            <person name="Fernandez L."/>
            <person name="Rodriguez J.M."/>
        </authorList>
    </citation>
    <scope>NUCLEOTIDE SEQUENCE [LARGE SCALE GENOMIC DNA]</scope>
    <source>
        <strain>CECT 5713</strain>
    </source>
</reference>
<protein>
    <recommendedName>
        <fullName evidence="1">Cell division protein DivIB</fullName>
    </recommendedName>
</protein>
<proteinExistence type="inferred from homology"/>
<feature type="chain" id="PRO_0000414775" description="Cell division protein DivIB">
    <location>
        <begin position="1"/>
        <end position="284"/>
    </location>
</feature>
<feature type="topological domain" description="Cytoplasmic" evidence="1">
    <location>
        <begin position="1"/>
        <end position="63"/>
    </location>
</feature>
<feature type="transmembrane region" description="Helical" evidence="1">
    <location>
        <begin position="64"/>
        <end position="84"/>
    </location>
</feature>
<feature type="topological domain" description="Extracellular" evidence="1">
    <location>
        <begin position="85"/>
        <end position="284"/>
    </location>
</feature>
<feature type="domain" description="POTRA" evidence="2">
    <location>
        <begin position="86"/>
        <end position="156"/>
    </location>
</feature>
<feature type="region of interest" description="Disordered" evidence="3">
    <location>
        <begin position="1"/>
        <end position="21"/>
    </location>
</feature>
<keyword id="KW-0131">Cell cycle</keyword>
<keyword id="KW-0132">Cell division</keyword>
<keyword id="KW-1003">Cell membrane</keyword>
<keyword id="KW-0472">Membrane</keyword>
<keyword id="KW-0812">Transmembrane</keyword>
<keyword id="KW-1133">Transmembrane helix</keyword>
<gene>
    <name evidence="1" type="primary">divIB</name>
    <name type="synonym">ftsQ</name>
    <name type="ordered locus">HN6_00866</name>
</gene>
<sequence length="284" mass="32275">MFGKRKDSKNKAMRDNEELTPWERQQLLREENIEKKQKKSKKILVSSNLVKFNGLRKRRLQKRVITLASIFGISAIISLYAILPVSRVSNIEIEGTDSQTKTAIIEASQVKKNESLFAVVPTKFLIRQRIKNDVATVKDVNISLKKNVVKFKVTEYDIVGYIQRKNTYYKLTSNGRELNVGQKATNGNYPLFLDFKKKTLLHEAAQQVGEMPKKVRFGISEIHSSPTKVNPKRVRLVMNDGNEVIGSIDTLATKMSYYPSMAKALGKKGVIDLEVGAYAYPYBK</sequence>
<name>DIVIB_LIGS5</name>
<evidence type="ECO:0000255" key="1">
    <source>
        <dbReference type="HAMAP-Rule" id="MF_00912"/>
    </source>
</evidence>
<evidence type="ECO:0000255" key="2">
    <source>
        <dbReference type="PROSITE-ProRule" id="PRU01115"/>
    </source>
</evidence>
<evidence type="ECO:0000256" key="3">
    <source>
        <dbReference type="SAM" id="MobiDB-lite"/>
    </source>
</evidence>